<gene>
    <name evidence="1" type="primary">coaD</name>
    <name type="ordered locus">FTW_1430</name>
</gene>
<reference key="1">
    <citation type="journal article" date="2007" name="PLoS ONE">
        <title>Complete genomic characterization of a pathogenic A.II strain of Francisella tularensis subspecies tularensis.</title>
        <authorList>
            <person name="Beckstrom-Sternberg S.M."/>
            <person name="Auerbach R.K."/>
            <person name="Godbole S."/>
            <person name="Pearson J.V."/>
            <person name="Beckstrom-Sternberg J.S."/>
            <person name="Deng Z."/>
            <person name="Munk C."/>
            <person name="Kubota K."/>
            <person name="Zhou Y."/>
            <person name="Bruce D."/>
            <person name="Noronha J."/>
            <person name="Scheuermann R.H."/>
            <person name="Wang A."/>
            <person name="Wei X."/>
            <person name="Wang J."/>
            <person name="Hao J."/>
            <person name="Wagner D.M."/>
            <person name="Brettin T.S."/>
            <person name="Brown N."/>
            <person name="Gilna P."/>
            <person name="Keim P.S."/>
        </authorList>
    </citation>
    <scope>NUCLEOTIDE SEQUENCE [LARGE SCALE GENOMIC DNA]</scope>
    <source>
        <strain>WY96-3418</strain>
    </source>
</reference>
<protein>
    <recommendedName>
        <fullName evidence="1">Phosphopantetheine adenylyltransferase</fullName>
        <ecNumber evidence="1">2.7.7.3</ecNumber>
    </recommendedName>
    <alternativeName>
        <fullName evidence="1">Dephospho-CoA pyrophosphorylase</fullName>
    </alternativeName>
    <alternativeName>
        <fullName evidence="1">Pantetheine-phosphate adenylyltransferase</fullName>
        <shortName evidence="1">PPAT</shortName>
    </alternativeName>
</protein>
<accession>A4IZ18</accession>
<feature type="chain" id="PRO_1000011149" description="Phosphopantetheine adenylyltransferase">
    <location>
        <begin position="1"/>
        <end position="162"/>
    </location>
</feature>
<feature type="binding site" evidence="1">
    <location>
        <begin position="10"/>
        <end position="11"/>
    </location>
    <ligand>
        <name>ATP</name>
        <dbReference type="ChEBI" id="CHEBI:30616"/>
    </ligand>
</feature>
<feature type="binding site" evidence="1">
    <location>
        <position position="10"/>
    </location>
    <ligand>
        <name>substrate</name>
    </ligand>
</feature>
<feature type="binding site" evidence="1">
    <location>
        <position position="18"/>
    </location>
    <ligand>
        <name>ATP</name>
        <dbReference type="ChEBI" id="CHEBI:30616"/>
    </ligand>
</feature>
<feature type="binding site" evidence="1">
    <location>
        <position position="42"/>
    </location>
    <ligand>
        <name>substrate</name>
    </ligand>
</feature>
<feature type="binding site" evidence="1">
    <location>
        <position position="74"/>
    </location>
    <ligand>
        <name>substrate</name>
    </ligand>
</feature>
<feature type="binding site" evidence="1">
    <location>
        <position position="88"/>
    </location>
    <ligand>
        <name>substrate</name>
    </ligand>
</feature>
<feature type="binding site" evidence="1">
    <location>
        <begin position="89"/>
        <end position="91"/>
    </location>
    <ligand>
        <name>ATP</name>
        <dbReference type="ChEBI" id="CHEBI:30616"/>
    </ligand>
</feature>
<feature type="binding site" evidence="1">
    <location>
        <position position="99"/>
    </location>
    <ligand>
        <name>ATP</name>
        <dbReference type="ChEBI" id="CHEBI:30616"/>
    </ligand>
</feature>
<feature type="binding site" evidence="1">
    <location>
        <begin position="124"/>
        <end position="130"/>
    </location>
    <ligand>
        <name>ATP</name>
        <dbReference type="ChEBI" id="CHEBI:30616"/>
    </ligand>
</feature>
<feature type="site" description="Transition state stabilizer" evidence="1">
    <location>
        <position position="18"/>
    </location>
</feature>
<evidence type="ECO:0000255" key="1">
    <source>
        <dbReference type="HAMAP-Rule" id="MF_00151"/>
    </source>
</evidence>
<comment type="function">
    <text evidence="1">Reversibly transfers an adenylyl group from ATP to 4'-phosphopantetheine, yielding dephospho-CoA (dPCoA) and pyrophosphate.</text>
</comment>
<comment type="catalytic activity">
    <reaction evidence="1">
        <text>(R)-4'-phosphopantetheine + ATP + H(+) = 3'-dephospho-CoA + diphosphate</text>
        <dbReference type="Rhea" id="RHEA:19801"/>
        <dbReference type="ChEBI" id="CHEBI:15378"/>
        <dbReference type="ChEBI" id="CHEBI:30616"/>
        <dbReference type="ChEBI" id="CHEBI:33019"/>
        <dbReference type="ChEBI" id="CHEBI:57328"/>
        <dbReference type="ChEBI" id="CHEBI:61723"/>
        <dbReference type="EC" id="2.7.7.3"/>
    </reaction>
</comment>
<comment type="cofactor">
    <cofactor evidence="1">
        <name>Mg(2+)</name>
        <dbReference type="ChEBI" id="CHEBI:18420"/>
    </cofactor>
</comment>
<comment type="pathway">
    <text evidence="1">Cofactor biosynthesis; coenzyme A biosynthesis; CoA from (R)-pantothenate: step 4/5.</text>
</comment>
<comment type="subunit">
    <text evidence="1">Homohexamer.</text>
</comment>
<comment type="subcellular location">
    <subcellularLocation>
        <location evidence="1">Cytoplasm</location>
    </subcellularLocation>
</comment>
<comment type="similarity">
    <text evidence="1">Belongs to the bacterial CoaD family.</text>
</comment>
<dbReference type="EC" id="2.7.7.3" evidence="1"/>
<dbReference type="EMBL" id="CP000608">
    <property type="protein sequence ID" value="ABO47169.1"/>
    <property type="molecule type" value="Genomic_DNA"/>
</dbReference>
<dbReference type="RefSeq" id="WP_003016535.1">
    <property type="nucleotide sequence ID" value="NC_009257.1"/>
</dbReference>
<dbReference type="SMR" id="A4IZ18"/>
<dbReference type="KEGG" id="ftw:FTW_1430"/>
<dbReference type="HOGENOM" id="CLU_100149_0_1_6"/>
<dbReference type="UniPathway" id="UPA00241">
    <property type="reaction ID" value="UER00355"/>
</dbReference>
<dbReference type="GO" id="GO:0005737">
    <property type="term" value="C:cytoplasm"/>
    <property type="evidence" value="ECO:0007669"/>
    <property type="project" value="UniProtKB-SubCell"/>
</dbReference>
<dbReference type="GO" id="GO:0005524">
    <property type="term" value="F:ATP binding"/>
    <property type="evidence" value="ECO:0007669"/>
    <property type="project" value="UniProtKB-KW"/>
</dbReference>
<dbReference type="GO" id="GO:0004595">
    <property type="term" value="F:pantetheine-phosphate adenylyltransferase activity"/>
    <property type="evidence" value="ECO:0007669"/>
    <property type="project" value="UniProtKB-UniRule"/>
</dbReference>
<dbReference type="GO" id="GO:0015937">
    <property type="term" value="P:coenzyme A biosynthetic process"/>
    <property type="evidence" value="ECO:0007669"/>
    <property type="project" value="UniProtKB-UniRule"/>
</dbReference>
<dbReference type="CDD" id="cd02163">
    <property type="entry name" value="PPAT"/>
    <property type="match status" value="1"/>
</dbReference>
<dbReference type="Gene3D" id="3.40.50.620">
    <property type="entry name" value="HUPs"/>
    <property type="match status" value="1"/>
</dbReference>
<dbReference type="HAMAP" id="MF_00151">
    <property type="entry name" value="PPAT_bact"/>
    <property type="match status" value="1"/>
</dbReference>
<dbReference type="InterPro" id="IPR004821">
    <property type="entry name" value="Cyt_trans-like"/>
</dbReference>
<dbReference type="InterPro" id="IPR001980">
    <property type="entry name" value="PPAT"/>
</dbReference>
<dbReference type="InterPro" id="IPR014729">
    <property type="entry name" value="Rossmann-like_a/b/a_fold"/>
</dbReference>
<dbReference type="NCBIfam" id="TIGR01510">
    <property type="entry name" value="coaD_prev_kdtB"/>
    <property type="match status" value="1"/>
</dbReference>
<dbReference type="NCBIfam" id="TIGR00125">
    <property type="entry name" value="cyt_tran_rel"/>
    <property type="match status" value="1"/>
</dbReference>
<dbReference type="PANTHER" id="PTHR21342">
    <property type="entry name" value="PHOSPHOPANTETHEINE ADENYLYLTRANSFERASE"/>
    <property type="match status" value="1"/>
</dbReference>
<dbReference type="PANTHER" id="PTHR21342:SF1">
    <property type="entry name" value="PHOSPHOPANTETHEINE ADENYLYLTRANSFERASE"/>
    <property type="match status" value="1"/>
</dbReference>
<dbReference type="Pfam" id="PF01467">
    <property type="entry name" value="CTP_transf_like"/>
    <property type="match status" value="1"/>
</dbReference>
<dbReference type="PRINTS" id="PR01020">
    <property type="entry name" value="LPSBIOSNTHSS"/>
</dbReference>
<dbReference type="SUPFAM" id="SSF52374">
    <property type="entry name" value="Nucleotidylyl transferase"/>
    <property type="match status" value="1"/>
</dbReference>
<keyword id="KW-0067">ATP-binding</keyword>
<keyword id="KW-0173">Coenzyme A biosynthesis</keyword>
<keyword id="KW-0963">Cytoplasm</keyword>
<keyword id="KW-0460">Magnesium</keyword>
<keyword id="KW-0547">Nucleotide-binding</keyword>
<keyword id="KW-0548">Nucleotidyltransferase</keyword>
<keyword id="KW-0808">Transferase</keyword>
<name>COAD_FRATW</name>
<proteinExistence type="inferred from homology"/>
<organism>
    <name type="scientific">Francisella tularensis subsp. tularensis (strain WY96-3418)</name>
    <dbReference type="NCBI Taxonomy" id="418136"/>
    <lineage>
        <taxon>Bacteria</taxon>
        <taxon>Pseudomonadati</taxon>
        <taxon>Pseudomonadota</taxon>
        <taxon>Gammaproteobacteria</taxon>
        <taxon>Thiotrichales</taxon>
        <taxon>Francisellaceae</taxon>
        <taxon>Francisella</taxon>
    </lineage>
</organism>
<sequence length="162" mass="18517">MNKIAIYPGTFDPITNGHVDLVERALNIFDEIVVAVSTAYGKNTLFDIRIREQMIKEVFKDNQRVKVVSFQGLLVDTAVKHNACAIVRGLRAVSDFDYEFQMSSMNNKLNSDIQTIFLTPSEKFSCISSTLVRAVAIHNYKRVDEFVPECVFREIKLKYSKE</sequence>